<keyword id="KW-0215">Deoxyribonucleotide synthesis</keyword>
<keyword id="KW-0408">Iron</keyword>
<keyword id="KW-0479">Metal-binding</keyword>
<keyword id="KW-0560">Oxidoreductase</keyword>
<keyword id="KW-1185">Reference proteome</keyword>
<organismHost>
    <name type="scientific">Escherichia coli</name>
    <dbReference type="NCBI Taxonomy" id="562"/>
</organismHost>
<name>RIR2_BPT4</name>
<accession>P11156</accession>
<accession>Q96211</accession>
<evidence type="ECO:0000250" key="1"/>
<evidence type="ECO:0000255" key="2">
    <source>
        <dbReference type="PROSITE-ProRule" id="PRU10014"/>
    </source>
</evidence>
<evidence type="ECO:0000305" key="3"/>
<sequence length="388" mass="45354">MSTVFNTNPVDVLNEPMFFGSGLGLARYDIQRHRVFEELIERQISFFWRPEEVNLMMDAAQFNKLPQYQQNIFTNNLKYQSLLDSIQGRAPSAVLMSLISDPSLDTWVATWTFSETIHSRSYTHIMRNLYTDPSKVFDEIVLDEAIMKRAESIGRYYDDVLVKTREWENAKDMVEYYKDQGLILADKDVEQRAKRDLMKSLYLCLHVINALEAIRFYVSFACTFNFHKNMEIMEGNAKIMKFIARDEQLHLKGTQYIIRQLQSGTDGDEWVKIAQECEQEAVDIFMEVNRQEKDWAVHLFKDGDVPGLNTNSMWSFIDYLTVSRMKQCGLPCPITDAPVKHPYPWIREYLNSDNVQSAPQEVELSSYLVAQIDNDVDDKVMMSFKKYF</sequence>
<dbReference type="EC" id="1.17.4.1"/>
<dbReference type="EMBL" id="X04140">
    <property type="protein sequence ID" value="CAA27757.1"/>
    <property type="molecule type" value="Genomic_DNA"/>
</dbReference>
<dbReference type="EMBL" id="AF158101">
    <property type="protein sequence ID" value="AAD42624.1"/>
    <property type="molecule type" value="Genomic_DNA"/>
</dbReference>
<dbReference type="PIR" id="S07190">
    <property type="entry name" value="RDBP24"/>
</dbReference>
<dbReference type="RefSeq" id="NP_049841.1">
    <property type="nucleotide sequence ID" value="NC_000866.4"/>
</dbReference>
<dbReference type="SMR" id="P11156"/>
<dbReference type="GeneID" id="1258601"/>
<dbReference type="KEGG" id="vg:1258601"/>
<dbReference type="OrthoDB" id="4477at10239"/>
<dbReference type="Proteomes" id="UP000009087">
    <property type="component" value="Segment"/>
</dbReference>
<dbReference type="GO" id="GO:0046872">
    <property type="term" value="F:metal ion binding"/>
    <property type="evidence" value="ECO:0007669"/>
    <property type="project" value="UniProtKB-KW"/>
</dbReference>
<dbReference type="GO" id="GO:0004748">
    <property type="term" value="F:ribonucleoside-diphosphate reductase activity, thioredoxin disulfide as acceptor"/>
    <property type="evidence" value="ECO:0007669"/>
    <property type="project" value="UniProtKB-EC"/>
</dbReference>
<dbReference type="GO" id="GO:0009263">
    <property type="term" value="P:deoxyribonucleotide biosynthetic process"/>
    <property type="evidence" value="ECO:0007669"/>
    <property type="project" value="UniProtKB-KW"/>
</dbReference>
<dbReference type="CDD" id="cd01049">
    <property type="entry name" value="RNRR2"/>
    <property type="match status" value="1"/>
</dbReference>
<dbReference type="FunFam" id="1.10.620.20:FF:000001">
    <property type="entry name" value="Ribonucleoside-diphosphate reductase 1 subunit beta"/>
    <property type="match status" value="1"/>
</dbReference>
<dbReference type="Gene3D" id="1.10.620.20">
    <property type="entry name" value="Ribonucleotide Reductase, subunit A"/>
    <property type="match status" value="1"/>
</dbReference>
<dbReference type="InterPro" id="IPR009078">
    <property type="entry name" value="Ferritin-like_SF"/>
</dbReference>
<dbReference type="InterPro" id="IPR012348">
    <property type="entry name" value="RNR-like"/>
</dbReference>
<dbReference type="InterPro" id="IPR033909">
    <property type="entry name" value="RNR_small"/>
</dbReference>
<dbReference type="InterPro" id="IPR030475">
    <property type="entry name" value="RNR_small_AS"/>
</dbReference>
<dbReference type="InterPro" id="IPR000358">
    <property type="entry name" value="RNR_small_fam"/>
</dbReference>
<dbReference type="NCBIfam" id="NF006576">
    <property type="entry name" value="PRK09101.1"/>
    <property type="match status" value="1"/>
</dbReference>
<dbReference type="PANTHER" id="PTHR23409">
    <property type="entry name" value="RIBONUCLEOSIDE-DIPHOSPHATE REDUCTASE SMALL CHAIN"/>
    <property type="match status" value="1"/>
</dbReference>
<dbReference type="PANTHER" id="PTHR23409:SF18">
    <property type="entry name" value="RIBONUCLEOSIDE-DIPHOSPHATE REDUCTASE SUBUNIT M2"/>
    <property type="match status" value="1"/>
</dbReference>
<dbReference type="Pfam" id="PF00268">
    <property type="entry name" value="Ribonuc_red_sm"/>
    <property type="match status" value="1"/>
</dbReference>
<dbReference type="SUPFAM" id="SSF47240">
    <property type="entry name" value="Ferritin-like"/>
    <property type="match status" value="1"/>
</dbReference>
<dbReference type="PROSITE" id="PS00368">
    <property type="entry name" value="RIBORED_SMALL"/>
    <property type="match status" value="1"/>
</dbReference>
<reference key="1">
    <citation type="journal article" date="1986" name="EMBO J.">
        <title>The bacteriophage T4 gene for the small subunit of ribonucleotide reductase contains an intron.</title>
        <authorList>
            <person name="Sjoeberg B.-M."/>
            <person name="Hahne S."/>
            <person name="Mathews C.Z."/>
            <person name="Mathews C.K."/>
            <person name="Rand K.N."/>
            <person name="Gait M.J."/>
        </authorList>
    </citation>
    <scope>NUCLEOTIDE SEQUENCE [GENOMIC DNA]</scope>
</reference>
<reference key="2">
    <citation type="journal article" date="2003" name="Microbiol. Mol. Biol. Rev.">
        <title>Bacteriophage T4 genome.</title>
        <authorList>
            <person name="Miller E.S."/>
            <person name="Kutter E."/>
            <person name="Mosig G."/>
            <person name="Arisaka F."/>
            <person name="Kunisawa T."/>
            <person name="Ruger W."/>
        </authorList>
    </citation>
    <scope>NUCLEOTIDE SEQUENCE [LARGE SCALE GENOMIC DNA]</scope>
</reference>
<gene>
    <name type="primary">NRDB</name>
</gene>
<organism>
    <name type="scientific">Enterobacteria phage T4</name>
    <name type="common">Bacteriophage T4</name>
    <dbReference type="NCBI Taxonomy" id="10665"/>
    <lineage>
        <taxon>Viruses</taxon>
        <taxon>Duplodnaviria</taxon>
        <taxon>Heunggongvirae</taxon>
        <taxon>Uroviricota</taxon>
        <taxon>Caudoviricetes</taxon>
        <taxon>Straboviridae</taxon>
        <taxon>Tevenvirinae</taxon>
        <taxon>Tequatrovirus</taxon>
    </lineage>
</organism>
<protein>
    <recommendedName>
        <fullName>Ribonucleoside-diphosphate reductase subunit beta</fullName>
        <ecNumber>1.17.4.1</ecNumber>
    </recommendedName>
    <alternativeName>
        <fullName>Protein B2</fullName>
    </alternativeName>
    <alternativeName>
        <fullName>Ribonucleotide reductase</fullName>
    </alternativeName>
</protein>
<comment type="function">
    <text>Provides the precursors necessary for DNA synthesis. Catalyzes the biosynthesis of deoxyribonucleotides from the corresponding ribonucleotides.</text>
</comment>
<comment type="catalytic activity">
    <reaction evidence="2">
        <text>a 2'-deoxyribonucleoside 5'-diphosphate + [thioredoxin]-disulfide + H2O = a ribonucleoside 5'-diphosphate + [thioredoxin]-dithiol</text>
        <dbReference type="Rhea" id="RHEA:23252"/>
        <dbReference type="Rhea" id="RHEA-COMP:10698"/>
        <dbReference type="Rhea" id="RHEA-COMP:10700"/>
        <dbReference type="ChEBI" id="CHEBI:15377"/>
        <dbReference type="ChEBI" id="CHEBI:29950"/>
        <dbReference type="ChEBI" id="CHEBI:50058"/>
        <dbReference type="ChEBI" id="CHEBI:57930"/>
        <dbReference type="ChEBI" id="CHEBI:73316"/>
        <dbReference type="EC" id="1.17.4.1"/>
    </reaction>
</comment>
<comment type="cofactor">
    <cofactor evidence="1">
        <name>Fe cation</name>
        <dbReference type="ChEBI" id="CHEBI:24875"/>
    </cofactor>
    <text evidence="1">Binds 2 iron ions per subunit.</text>
</comment>
<comment type="subunit">
    <text>Heterodimer of a large and a small subunit.</text>
</comment>
<comment type="similarity">
    <text evidence="3">Belongs to the ribonucleoside diphosphate reductase small chain family.</text>
</comment>
<proteinExistence type="inferred from homology"/>
<feature type="chain" id="PRO_0000190490" description="Ribonucleoside-diphosphate reductase subunit beta">
    <location>
        <begin position="1"/>
        <end position="388"/>
    </location>
</feature>
<feature type="active site" evidence="2">
    <location>
        <position position="122"/>
    </location>
</feature>
<feature type="binding site" evidence="2">
    <location>
        <position position="84"/>
    </location>
    <ligand>
        <name>Fe cation</name>
        <dbReference type="ChEBI" id="CHEBI:24875"/>
        <label>1</label>
    </ligand>
</feature>
<feature type="binding site" evidence="2">
    <location>
        <position position="115"/>
    </location>
    <ligand>
        <name>Fe cation</name>
        <dbReference type="ChEBI" id="CHEBI:24875"/>
        <label>1</label>
    </ligand>
</feature>
<feature type="binding site" evidence="1">
    <location>
        <position position="115"/>
    </location>
    <ligand>
        <name>Fe cation</name>
        <dbReference type="ChEBI" id="CHEBI:24875"/>
        <label>2</label>
    </ligand>
</feature>
<feature type="binding site" evidence="2">
    <location>
        <position position="118"/>
    </location>
    <ligand>
        <name>Fe cation</name>
        <dbReference type="ChEBI" id="CHEBI:24875"/>
        <label>1</label>
    </ligand>
</feature>
<feature type="binding site" evidence="1">
    <location>
        <position position="212"/>
    </location>
    <ligand>
        <name>Fe cation</name>
        <dbReference type="ChEBI" id="CHEBI:24875"/>
        <label>2</label>
    </ligand>
</feature>
<feature type="binding site" evidence="1">
    <location>
        <position position="247"/>
    </location>
    <ligand>
        <name>Fe cation</name>
        <dbReference type="ChEBI" id="CHEBI:24875"/>
        <label>2</label>
    </ligand>
</feature>
<feature type="binding site" evidence="1">
    <location>
        <position position="250"/>
    </location>
    <ligand>
        <name>Fe cation</name>
        <dbReference type="ChEBI" id="CHEBI:24875"/>
        <label>2</label>
    </ligand>
</feature>